<keyword id="KW-0002">3D-structure</keyword>
<keyword id="KW-0007">Acetylation</keyword>
<keyword id="KW-0025">Alternative splicing</keyword>
<keyword id="KW-0963">Cytoplasm</keyword>
<keyword id="KW-0225">Disease variant</keyword>
<keyword id="KW-0947">Limb-girdle muscular dystrophy</keyword>
<keyword id="KW-0539">Nucleus</keyword>
<keyword id="KW-0597">Phosphoprotein</keyword>
<keyword id="KW-0653">Protein transport</keyword>
<keyword id="KW-1267">Proteomics identification</keyword>
<keyword id="KW-1185">Reference proteome</keyword>
<keyword id="KW-0813">Transport</keyword>
<reference key="1">
    <citation type="journal article" date="1999" name="J. Cell Biol.">
        <title>Transportin-SR, a nuclear import receptor for SR proteins.</title>
        <authorList>
            <person name="Kataoka N."/>
            <person name="Bachorik J.L."/>
            <person name="Dreyfuss G."/>
        </authorList>
    </citation>
    <scope>NUCLEOTIDE SEQUENCE [MRNA] (ISOFORM 1)</scope>
    <scope>FUNCTION</scope>
    <scope>INTERACTION WITH SFRS1 AND SFRS2</scope>
</reference>
<reference key="2">
    <citation type="submission" date="1999-04" db="EMBL/GenBank/DDBJ databases">
        <title>A human homologue of yeast Mtr10p and its role in nuclear protein import.</title>
        <authorList>
            <person name="Kutay U."/>
            <person name="Izaurralde E."/>
            <person name="Hartmann E."/>
            <person name="Goerlich D."/>
        </authorList>
    </citation>
    <scope>NUCLEOTIDE SEQUENCE [MRNA] (ISOFORM 2)</scope>
</reference>
<reference key="3">
    <citation type="submission" date="2006-07" db="EMBL/GenBank/DDBJ databases">
        <authorList>
            <person name="Totoki Y."/>
            <person name="Toyoda A."/>
            <person name="Takeda T."/>
            <person name="Sakaki Y."/>
            <person name="Tanaka A."/>
            <person name="Yokoyama S."/>
        </authorList>
    </citation>
    <scope>NUCLEOTIDE SEQUENCE [LARGE SCALE MRNA] (ISOFORM 4)</scope>
    <source>
        <tissue>Colon</tissue>
    </source>
</reference>
<reference key="4">
    <citation type="journal article" date="2003" name="Nature">
        <title>The DNA sequence of human chromosome 7.</title>
        <authorList>
            <person name="Hillier L.W."/>
            <person name="Fulton R.S."/>
            <person name="Fulton L.A."/>
            <person name="Graves T.A."/>
            <person name="Pepin K.H."/>
            <person name="Wagner-McPherson C."/>
            <person name="Layman D."/>
            <person name="Maas J."/>
            <person name="Jaeger S."/>
            <person name="Walker R."/>
            <person name="Wylie K."/>
            <person name="Sekhon M."/>
            <person name="Becker M.C."/>
            <person name="O'Laughlin M.D."/>
            <person name="Schaller M.E."/>
            <person name="Fewell G.A."/>
            <person name="Delehaunty K.D."/>
            <person name="Miner T.L."/>
            <person name="Nash W.E."/>
            <person name="Cordes M."/>
            <person name="Du H."/>
            <person name="Sun H."/>
            <person name="Edwards J."/>
            <person name="Bradshaw-Cordum H."/>
            <person name="Ali J."/>
            <person name="Andrews S."/>
            <person name="Isak A."/>
            <person name="Vanbrunt A."/>
            <person name="Nguyen C."/>
            <person name="Du F."/>
            <person name="Lamar B."/>
            <person name="Courtney L."/>
            <person name="Kalicki J."/>
            <person name="Ozersky P."/>
            <person name="Bielicki L."/>
            <person name="Scott K."/>
            <person name="Holmes A."/>
            <person name="Harkins R."/>
            <person name="Harris A."/>
            <person name="Strong C.M."/>
            <person name="Hou S."/>
            <person name="Tomlinson C."/>
            <person name="Dauphin-Kohlberg S."/>
            <person name="Kozlowicz-Reilly A."/>
            <person name="Leonard S."/>
            <person name="Rohlfing T."/>
            <person name="Rock S.M."/>
            <person name="Tin-Wollam A.-M."/>
            <person name="Abbott A."/>
            <person name="Minx P."/>
            <person name="Maupin R."/>
            <person name="Strowmatt C."/>
            <person name="Latreille P."/>
            <person name="Miller N."/>
            <person name="Johnson D."/>
            <person name="Murray J."/>
            <person name="Woessner J.P."/>
            <person name="Wendl M.C."/>
            <person name="Yang S.-P."/>
            <person name="Schultz B.R."/>
            <person name="Wallis J.W."/>
            <person name="Spieth J."/>
            <person name="Bieri T.A."/>
            <person name="Nelson J.O."/>
            <person name="Berkowicz N."/>
            <person name="Wohldmann P.E."/>
            <person name="Cook L.L."/>
            <person name="Hickenbotham M.T."/>
            <person name="Eldred J."/>
            <person name="Williams D."/>
            <person name="Bedell J.A."/>
            <person name="Mardis E.R."/>
            <person name="Clifton S.W."/>
            <person name="Chissoe S.L."/>
            <person name="Marra M.A."/>
            <person name="Raymond C."/>
            <person name="Haugen E."/>
            <person name="Gillett W."/>
            <person name="Zhou Y."/>
            <person name="James R."/>
            <person name="Phelps K."/>
            <person name="Iadanoto S."/>
            <person name="Bubb K."/>
            <person name="Simms E."/>
            <person name="Levy R."/>
            <person name="Clendenning J."/>
            <person name="Kaul R."/>
            <person name="Kent W.J."/>
            <person name="Furey T.S."/>
            <person name="Baertsch R.A."/>
            <person name="Brent M.R."/>
            <person name="Keibler E."/>
            <person name="Flicek P."/>
            <person name="Bork P."/>
            <person name="Suyama M."/>
            <person name="Bailey J.A."/>
            <person name="Portnoy M.E."/>
            <person name="Torrents D."/>
            <person name="Chinwalla A.T."/>
            <person name="Gish W.R."/>
            <person name="Eddy S.R."/>
            <person name="McPherson J.D."/>
            <person name="Olson M.V."/>
            <person name="Eichler E.E."/>
            <person name="Green E.D."/>
            <person name="Waterston R.H."/>
            <person name="Wilson R.K."/>
        </authorList>
    </citation>
    <scope>NUCLEOTIDE SEQUENCE [LARGE SCALE GENOMIC DNA]</scope>
</reference>
<reference key="5">
    <citation type="journal article" date="2003" name="Science">
        <title>Human chromosome 7: DNA sequence and biology.</title>
        <authorList>
            <person name="Scherer S.W."/>
            <person name="Cheung J."/>
            <person name="MacDonald J.R."/>
            <person name="Osborne L.R."/>
            <person name="Nakabayashi K."/>
            <person name="Herbrick J.-A."/>
            <person name="Carson A.R."/>
            <person name="Parker-Katiraee L."/>
            <person name="Skaug J."/>
            <person name="Khaja R."/>
            <person name="Zhang J."/>
            <person name="Hudek A.K."/>
            <person name="Li M."/>
            <person name="Haddad M."/>
            <person name="Duggan G.E."/>
            <person name="Fernandez B.A."/>
            <person name="Kanematsu E."/>
            <person name="Gentles S."/>
            <person name="Christopoulos C.C."/>
            <person name="Choufani S."/>
            <person name="Kwasnicka D."/>
            <person name="Zheng X.H."/>
            <person name="Lai Z."/>
            <person name="Nusskern D.R."/>
            <person name="Zhang Q."/>
            <person name="Gu Z."/>
            <person name="Lu F."/>
            <person name="Zeesman S."/>
            <person name="Nowaczyk M.J."/>
            <person name="Teshima I."/>
            <person name="Chitayat D."/>
            <person name="Shuman C."/>
            <person name="Weksberg R."/>
            <person name="Zackai E.H."/>
            <person name="Grebe T.A."/>
            <person name="Cox S.R."/>
            <person name="Kirkpatrick S.J."/>
            <person name="Rahman N."/>
            <person name="Friedman J.M."/>
            <person name="Heng H.H.Q."/>
            <person name="Pelicci P.G."/>
            <person name="Lo-Coco F."/>
            <person name="Belloni E."/>
            <person name="Shaffer L.G."/>
            <person name="Pober B."/>
            <person name="Morton C.C."/>
            <person name="Gusella J.F."/>
            <person name="Bruns G.A.P."/>
            <person name="Korf B.R."/>
            <person name="Quade B.J."/>
            <person name="Ligon A.H."/>
            <person name="Ferguson H."/>
            <person name="Higgins A.W."/>
            <person name="Leach N.T."/>
            <person name="Herrick S.R."/>
            <person name="Lemyre E."/>
            <person name="Farra C.G."/>
            <person name="Kim H.-G."/>
            <person name="Summers A.M."/>
            <person name="Gripp K.W."/>
            <person name="Roberts W."/>
            <person name="Szatmari P."/>
            <person name="Winsor E.J.T."/>
            <person name="Grzeschik K.-H."/>
            <person name="Teebi A."/>
            <person name="Minassian B.A."/>
            <person name="Kere J."/>
            <person name="Armengol L."/>
            <person name="Pujana M.A."/>
            <person name="Estivill X."/>
            <person name="Wilson M.D."/>
            <person name="Koop B.F."/>
            <person name="Tosi S."/>
            <person name="Moore G.E."/>
            <person name="Boright A.P."/>
            <person name="Zlotorynski E."/>
            <person name="Kerem B."/>
            <person name="Kroisel P.M."/>
            <person name="Petek E."/>
            <person name="Oscier D.G."/>
            <person name="Mould S.J."/>
            <person name="Doehner H."/>
            <person name="Doehner K."/>
            <person name="Rommens J.M."/>
            <person name="Vincent J.B."/>
            <person name="Venter J.C."/>
            <person name="Li P.W."/>
            <person name="Mural R.J."/>
            <person name="Adams M.D."/>
            <person name="Tsui L.-C."/>
        </authorList>
    </citation>
    <scope>NUCLEOTIDE SEQUENCE [LARGE SCALE GENOMIC DNA]</scope>
</reference>
<reference key="6">
    <citation type="journal article" date="2004" name="Genome Res.">
        <title>The status, quality, and expansion of the NIH full-length cDNA project: the Mammalian Gene Collection (MGC).</title>
        <authorList>
            <consortium name="The MGC Project Team"/>
        </authorList>
    </citation>
    <scope>NUCLEOTIDE SEQUENCE [LARGE SCALE MRNA] OF 586-923 (ISOFORM 3)</scope>
    <source>
        <tissue>Ovary</tissue>
    </source>
</reference>
<reference key="7">
    <citation type="journal article" date="2000" name="J. Biol. Chem.">
        <title>A human importin-beta family protein, transportin-SR2, interacts with the phosphorylated RS domain of SR proteins.</title>
        <authorList>
            <person name="Lai M.-C."/>
            <person name="Lin R.-I."/>
            <person name="Huang S.-Y."/>
            <person name="Tsai C.-W."/>
            <person name="Tarn W.-Y."/>
        </authorList>
    </citation>
    <scope>FUNCTION</scope>
    <scope>INTERACTION WITH SFRS1</scope>
    <scope>SUBCELLULAR LOCATION</scope>
</reference>
<reference key="8">
    <citation type="journal article" date="2001" name="Proc. Natl. Acad. Sci. U.S.A.">
        <title>Transportin-SR2 mediates nuclear import of phosphorylated SR proteins.</title>
        <authorList>
            <person name="Lai M.-C."/>
            <person name="Lin R.-I."/>
            <person name="Tarn W.-Y."/>
        </authorList>
    </citation>
    <scope>FUNCTION</scope>
    <scope>INTERACTION WITH SFRS1 AND NUP62</scope>
</reference>
<reference key="9">
    <citation type="journal article" date="2003" name="EMBO J.">
        <title>A novel splicing regulator shares a nuclear import pathway with SR proteins.</title>
        <authorList>
            <person name="Lai M.-C."/>
            <person name="Kuo H.-W."/>
            <person name="Chang W.-C."/>
            <person name="Tarn W.-Y."/>
        </authorList>
    </citation>
    <scope>FUNCTION</scope>
    <scope>INTERACTION WITH RBM4</scope>
</reference>
<reference key="10">
    <citation type="journal article" date="2008" name="Curr. Biol.">
        <title>Transportin-SR2 imports HIV into the nucleus.</title>
        <authorList>
            <person name="Christ F."/>
            <person name="Thys W."/>
            <person name="De Rijck J."/>
            <person name="Gijsbers R."/>
            <person name="Albanese A."/>
            <person name="Arosio D."/>
            <person name="Emiliani S."/>
            <person name="Rain J.C."/>
            <person name="Benarous R."/>
            <person name="Cereseto A."/>
            <person name="Debyser Z."/>
        </authorList>
    </citation>
    <scope>FUNCTION (MICROBIAL INFECTION)</scope>
    <scope>INTERACTION WITH THE HIV-1 PRE-INTEGRATION COMPLEX (MICROBIAL INFECTION)</scope>
</reference>
<reference key="11">
    <citation type="journal article" date="2009" name="Anal. Chem.">
        <title>Lys-N and trypsin cover complementary parts of the phosphoproteome in a refined SCX-based approach.</title>
        <authorList>
            <person name="Gauci S."/>
            <person name="Helbig A.O."/>
            <person name="Slijper M."/>
            <person name="Krijgsveld J."/>
            <person name="Heck A.J."/>
            <person name="Mohammed S."/>
        </authorList>
    </citation>
    <scope>ACETYLATION [LARGE SCALE ANALYSIS] AT MET-1</scope>
    <scope>IDENTIFICATION BY MASS SPECTROMETRY [LARGE SCALE ANALYSIS]</scope>
</reference>
<reference key="12">
    <citation type="journal article" date="2009" name="Sci. Signal.">
        <title>Quantitative phosphoproteomic analysis of T cell receptor signaling reveals system-wide modulation of protein-protein interactions.</title>
        <authorList>
            <person name="Mayya V."/>
            <person name="Lundgren D.H."/>
            <person name="Hwang S.-I."/>
            <person name="Rezaul K."/>
            <person name="Wu L."/>
            <person name="Eng J.K."/>
            <person name="Rodionov V."/>
            <person name="Han D.K."/>
        </authorList>
    </citation>
    <scope>PHOSPHORYLATION [LARGE SCALE ANALYSIS] AT THR-896</scope>
    <scope>IDENTIFICATION BY MASS SPECTROMETRY [LARGE SCALE ANALYSIS]</scope>
    <source>
        <tissue>Leukemic T-cell</tissue>
    </source>
</reference>
<reference key="13">
    <citation type="journal article" date="2011" name="BMC Syst. Biol.">
        <title>Initial characterization of the human central proteome.</title>
        <authorList>
            <person name="Burkard T.R."/>
            <person name="Planyavsky M."/>
            <person name="Kaupe I."/>
            <person name="Breitwieser F.P."/>
            <person name="Buerckstuemmer T."/>
            <person name="Bennett K.L."/>
            <person name="Superti-Furga G."/>
            <person name="Colinge J."/>
        </authorList>
    </citation>
    <scope>IDENTIFICATION BY MASS SPECTROMETRY [LARGE SCALE ANALYSIS]</scope>
</reference>
<reference key="14">
    <citation type="journal article" date="2011" name="PLoS Pathog.">
        <title>Transportin 3 promotes a nuclear maturation step required for efficient HIV-1 integration.</title>
        <authorList>
            <person name="Zhou L."/>
            <person name="Sokolskaja E."/>
            <person name="Jolly C."/>
            <person name="James W."/>
            <person name="Cowley S.A."/>
            <person name="Fassati A."/>
        </authorList>
    </citation>
    <scope>FUNCTION (MICROBIAL INFECTION)</scope>
</reference>
<reference key="15">
    <citation type="journal article" date="2012" name="J. Virol.">
        <title>TNPO3 is required for HIV-1 replication after nuclear import but prior to integration and binds the HIV-1 core.</title>
        <authorList>
            <person name="Valle-Casuso J.C."/>
            <person name="Di Nunzio F."/>
            <person name="Yang Y."/>
            <person name="Reszka N."/>
            <person name="Lienlaf M."/>
            <person name="Arhel N."/>
            <person name="Perez P."/>
            <person name="Brass A.L."/>
            <person name="Diaz-Griffero F."/>
        </authorList>
    </citation>
    <scope>FUNCTION (MICROBIAL INFECTION)</scope>
</reference>
<reference key="16">
    <citation type="journal article" date="2013" name="J. Biol. Chem.">
        <title>Interaction of transportin-SR2 with Ras-related nuclear protein (Ran) GTPase.</title>
        <authorList>
            <person name="Taltynov O."/>
            <person name="Demeulemeester J."/>
            <person name="Christ F."/>
            <person name="De Houwer S."/>
            <person name="Tsirkone V.G."/>
            <person name="Gerard M."/>
            <person name="Weeks S.D."/>
            <person name="Strelkov S.V."/>
            <person name="Debyser Z."/>
        </authorList>
    </citation>
    <scope>FUNCTION</scope>
    <scope>INTERACTION WITH RAN</scope>
    <scope>MUTAGENESIS OF 145-GLU--GLU-153</scope>
</reference>
<reference key="17">
    <citation type="journal article" date="2013" name="J. Proteome Res.">
        <title>Toward a comprehensive characterization of a human cancer cell phosphoproteome.</title>
        <authorList>
            <person name="Zhou H."/>
            <person name="Di Palma S."/>
            <person name="Preisinger C."/>
            <person name="Peng M."/>
            <person name="Polat A.N."/>
            <person name="Heck A.J."/>
            <person name="Mohammed S."/>
        </authorList>
    </citation>
    <scope>PHOSPHORYLATION [LARGE SCALE ANALYSIS] AT SER-74</scope>
    <scope>IDENTIFICATION BY MASS SPECTROMETRY [LARGE SCALE ANALYSIS]</scope>
    <source>
        <tissue>Erythroleukemia</tissue>
    </source>
</reference>
<reference key="18">
    <citation type="journal article" date="2013" name="PLoS ONE">
        <title>Next-generation sequencing identifies transportin 3 as the causative gene for LGMD1F.</title>
        <authorList>
            <person name="Torella A."/>
            <person name="Fanin M."/>
            <person name="Mutarelli M."/>
            <person name="Peterle E."/>
            <person name="Del Vecchio Blanco F."/>
            <person name="Rispoli R."/>
            <person name="Savarese M."/>
            <person name="Garofalo A."/>
            <person name="Piluso G."/>
            <person name="Morandi L."/>
            <person name="Ricci G."/>
            <person name="Siciliano G."/>
            <person name="Angelini C."/>
            <person name="Nigro V."/>
        </authorList>
    </citation>
    <scope>INVOLVEMENT IN LGMDD2</scope>
    <scope>TISSUE SPECIFICITY</scope>
    <scope>VARIANTS LGMDD2 PRO-818 AND CYS-SER-HIS-SER-CYS-THR-VAL-PRO-VAL-THR-GLN-GLU-CYS-LEU-PHE-923 EXT</scope>
</reference>
<reference key="19">
    <citation type="journal article" date="2014" name="J. Proteomics">
        <title>An enzyme assisted RP-RPLC approach for in-depth analysis of human liver phosphoproteome.</title>
        <authorList>
            <person name="Bian Y."/>
            <person name="Song C."/>
            <person name="Cheng K."/>
            <person name="Dong M."/>
            <person name="Wang F."/>
            <person name="Huang J."/>
            <person name="Sun D."/>
            <person name="Wang L."/>
            <person name="Ye M."/>
            <person name="Zou H."/>
        </authorList>
    </citation>
    <scope>IDENTIFICATION BY MASS SPECTROMETRY [LARGE SCALE ANALYSIS]</scope>
    <source>
        <tissue>Liver</tissue>
    </source>
</reference>
<reference key="20">
    <citation type="journal article" date="2015" name="Proteomics">
        <title>N-terminome analysis of the human mitochondrial proteome.</title>
        <authorList>
            <person name="Vaca Jacome A.S."/>
            <person name="Rabilloud T."/>
            <person name="Schaeffer-Reiss C."/>
            <person name="Rompais M."/>
            <person name="Ayoub D."/>
            <person name="Lane L."/>
            <person name="Bairoch A."/>
            <person name="Van Dorsselaer A."/>
            <person name="Carapito C."/>
        </authorList>
    </citation>
    <scope>IDENTIFICATION BY MASS SPECTROMETRY [LARGE SCALE ANALYSIS]</scope>
</reference>
<reference key="21">
    <citation type="journal article" date="2017" name="J. Biol. Chem.">
        <title>N-terminal half of transportin SR2 interacts with HIV integrase.</title>
        <authorList>
            <person name="Tsirkone V.G."/>
            <person name="Blokken J."/>
            <person name="De Wit F."/>
            <person name="Breemans J."/>
            <person name="De Houwer S."/>
            <person name="Debyser Z."/>
            <person name="Christ F."/>
            <person name="Strelkov S.V."/>
        </authorList>
    </citation>
    <scope>INTERACTION WITH HIV-1 INTEGRASE (MICROBIAL INFECTION)</scope>
</reference>
<reference key="22">
    <citation type="journal article" date="2018" name="Retrovirology">
        <title>Inhibitors of the integrase-transportin-SR2 interaction block HIV nuclear import.</title>
        <authorList>
            <person name="Demeulemeester J."/>
            <person name="Blokken J."/>
            <person name="De Houwer S."/>
            <person name="Dirix L."/>
            <person name="Klaassen H."/>
            <person name="Marchand A."/>
            <person name="Chaltin P."/>
            <person name="Christ F."/>
            <person name="Debyser Z."/>
        </authorList>
    </citation>
    <scope>FUNCTION (MICROBIAL INFECTION)</scope>
</reference>
<reference key="23">
    <citation type="journal article" date="2019" name="PLoS Pathog.">
        <title>The mutation of Transportin 3 gene that causes limb girdle muscular dystrophy 1F induces protection against HIV-1 infection.</title>
        <authorList>
            <person name="Rodriguez-Mora S."/>
            <person name="De Wit F."/>
            <person name="Garcia-Perez J."/>
            <person name="Bermejo M."/>
            <person name="Lopez-Huertas M.R."/>
            <person name="Mateos E."/>
            <person name="Marti P."/>
            <person name="Rocha S."/>
            <person name="Vigon L."/>
            <person name="Christ F."/>
            <person name="Debyser Z."/>
            <person name="Vilchez J.J."/>
            <person name="Coiras M."/>
            <person name="Alcami J."/>
        </authorList>
    </citation>
    <scope>FUNCTION</scope>
    <scope>POLYMORPHISM</scope>
    <scope>VARIANT LGMDD2 CYS-SER-HIS-SER-CYS-THR-VAL-PRO-VAL-THR-GLN-GLU-CYS-LEU-PHE-923 EXT</scope>
    <scope>CHARACTERIZATION OF VARIANT LGMDD2 CYS-SER-HIS-SER-CYS-THR-VAL-PRO-VAL-THR-GLN-GLU-CYS-LEU-PHE-923 EXT</scope>
</reference>
<reference evidence="32" key="24">
    <citation type="journal article" date="2014" name="Acta Crystallogr. F">
        <title>Structure of transportin SR2, a karyopherin involved in human disease, in complex with Ran.</title>
        <authorList>
            <person name="Tsirkone V.G."/>
            <person name="Beutels K.G."/>
            <person name="Demeulemeester J."/>
            <person name="Debyser Z."/>
            <person name="Christ F."/>
            <person name="Strelkov S.V."/>
        </authorList>
    </citation>
    <scope>X-RAY CRYSTALLOGRAPHY (2.90 ANGSTROMS) OF 3-923 IN COMPLEX WITH RAN</scope>
</reference>
<reference evidence="29 30 31" key="25">
    <citation type="journal article" date="2014" name="Proc. Natl. Acad. Sci. U.S.A.">
        <title>Structural basis for nuclear import of splicing factors by human Transportin 3.</title>
        <authorList>
            <person name="Maertens G.N."/>
            <person name="Cook N.J."/>
            <person name="Wang W."/>
            <person name="Hare S."/>
            <person name="Gupta S.S."/>
            <person name="Oztop I."/>
            <person name="Lee K."/>
            <person name="Pye V.E."/>
            <person name="Cosnefroy O."/>
            <person name="Snijders A.P."/>
            <person name="KewalRamani V.N."/>
            <person name="Fassati A."/>
            <person name="Engelman A."/>
            <person name="Cherepanov P."/>
        </authorList>
    </citation>
    <scope>X-RAY CRYSTALLOGRAPHY (2.56 ANGSTROMS) IN COMPLEX WITH RAN AND SFRS1</scope>
    <scope>FUNCTION</scope>
    <scope>INTERACTION WITH CPSF6; RAN AND SFRS1</scope>
    <scope>MUTAGENESIS OF ARG-620; GLU-660; ARG-664; ARG-667; ARG-671; TYR-702; ASP-750; ASP-751; ARG-754 AND ARG-758</scope>
</reference>
<reference evidence="33" key="26">
    <citation type="journal article" date="2019" name="Nucleic Acids Res.">
        <title>Differential role for phosphorylation in alternative polyadenylation function versus nuclear import of SR-like protein CPSF6.</title>
        <authorList>
            <person name="Jang S."/>
            <person name="Cook N.J."/>
            <person name="Pye V.E."/>
            <person name="Bedwell G.J."/>
            <person name="Dudek A.M."/>
            <person name="Singh P.K."/>
            <person name="Cherepanov P."/>
            <person name="Engelman A.N."/>
        </authorList>
    </citation>
    <scope>X-RAY CRYSTALLOGRAPHY (2.70 ANGSTROMS) IN COMPLEX WITH CPSF6</scope>
    <scope>FUNCTION</scope>
</reference>
<reference key="27">
    <citation type="journal article" date="2013" name="Brain">
        <title>Limb-girdle muscular dystrophy 1F is caused by a microdeletion in the transportin 3 gene.</title>
        <authorList>
            <person name="Melia M.J."/>
            <person name="Kubota A."/>
            <person name="Ortolano S."/>
            <person name="Vilchez J.J."/>
            <person name="Gamez J."/>
            <person name="Tanji K."/>
            <person name="Bonilla E."/>
            <person name="Palenzuela L."/>
            <person name="Fernandez-Cadenas I."/>
            <person name="Pristoupilova A."/>
            <person name="Garcia-Arumi E."/>
            <person name="Andreu A.L."/>
            <person name="Navarro C."/>
            <person name="Hirano M."/>
            <person name="Marti R."/>
        </authorList>
    </citation>
    <scope>VARIANT LGMDD2 CYS-SER-HIS-SER-CYS-THR-VAL-PRO-VAL-THR-GLN-GLU-CYS-LEU-PHE-923 EXT</scope>
    <scope>CHARACTERIZATION OF VARIANT LGMDD2 CYS-SER-HIS-SER-CYS-THR-VAL-PRO-VAL-THR-GLN-GLU-CYS-LEU-PHE-923 EXT</scope>
    <scope>SUBCELLULAR LOCATION</scope>
</reference>
<reference key="28">
    <citation type="journal article" date="2019" name="Eur. J. Med. Genet.">
        <title>A novel pathogenic variant in TNPO3 in a Hungarian family with limb-girdle muscular dystrophy 1F.</title>
        <authorList>
            <person name="Pal E."/>
            <person name="Zima J."/>
            <person name="Hadzsiev K."/>
            <person name="Ito Y.A."/>
            <person name="Hartley T."/>
            <person name="Boycott K.M."/>
            <person name="Melegh B."/>
        </authorList>
    </citation>
    <scope>VARIANT LGMDD2 ARG-923 DELINS ASP-SER-SER-HIS-SER-CYS-THR-VAL-PRO-VAL-THR-GLN-GLU-CYS-LEU-PHE</scope>
</reference>
<reference key="29">
    <citation type="journal article" date="2019" name="Neurol. Genet.">
        <title>Novel mutation in TNPO3 causes congenital limb-girdle myopathy with slow progression.</title>
        <authorList>
            <person name="Vihola A."/>
            <person name="Palmio J."/>
            <person name="Danielsson O."/>
            <person name="Penttilae S."/>
            <person name="Louiselle D."/>
            <person name="Pittman S."/>
            <person name="Weihl C."/>
            <person name="Udd B."/>
        </authorList>
    </citation>
    <scope>VARIANT LGMDD2 920-ARG--ARG-923 DELINS GLY-CYS-PHE-ASP-SER-SER-HIS-SER-CYS-THR-VAL-PRO-VAL-THR-GLN-GLU-CYS-LEU-PHE</scope>
    <scope>SUBCELLULAR LOCATION</scope>
</reference>
<feature type="chain" id="PRO_0000120781" description="Transportin-3">
    <location>
        <begin position="1"/>
        <end position="923"/>
    </location>
</feature>
<feature type="modified residue" description="N-acetylmethionine" evidence="34">
    <location>
        <position position="1"/>
    </location>
</feature>
<feature type="modified residue" description="Phosphoserine" evidence="36">
    <location>
        <position position="74"/>
    </location>
</feature>
<feature type="modified residue" description="Phosphothreonine" evidence="35">
    <location>
        <position position="896"/>
    </location>
</feature>
<feature type="splice variant" id="VSP_030174" description="In isoform 1." evidence="18">
    <original>P</original>
    <variation>PKKPFSNAACHHSLLFGQNITSEISNCEYLPPVLR</variation>
    <location>
        <position position="453"/>
    </location>
</feature>
<feature type="splice variant" id="VSP_045494" description="In isoform 4." evidence="24">
    <location>
        <begin position="500"/>
        <end position="563"/>
    </location>
</feature>
<feature type="splice variant" id="VSP_011178" description="In isoform 3." evidence="21">
    <original>SAEECKQVCWALRDFTRLFR</original>
    <variation>RNVFFN</variation>
    <location>
        <begin position="904"/>
        <end position="923"/>
    </location>
</feature>
<feature type="sequence variant" id="VAR_071822" description="In LGMDD2; dbSNP:rs587777431." evidence="9">
    <original>R</original>
    <variation>P</variation>
    <location>
        <position position="818"/>
    </location>
</feature>
<feature type="sequence variant" id="VAR_082591" description="In LGMDD2." evidence="16">
    <original>RLFR</original>
    <variation>GCFDSSHSCTVPVTQECLF</variation>
    <location>
        <begin position="920"/>
        <end position="923"/>
    </location>
</feature>
<feature type="sequence variant" id="VAR_082592" description="In LGMDD2." evidence="15">
    <original>R</original>
    <variation>DSSHSCTVPVTQECLF</variation>
    <location>
        <position position="923"/>
    </location>
</feature>
<feature type="sequence variant" id="VAR_082593" description="In LGMDD2; induces relocalization to nuclear periphery; impaired ability to transport target proteins into the nucleus; induces resistance to HIV-1 infection; dbSNP:rs587777431." evidence="8 9 17">
    <original>R</original>
    <variation>RCSHSCTVPVTQECLF</variation>
    <location>
        <position position="923"/>
    </location>
</feature>
<feature type="mutagenesis site" description="Decreased interaction with GTP-bound Ran." evidence="10">
    <original>EILTVLPEE</original>
    <variation>QILTALPQQ</variation>
    <location>
        <begin position="145"/>
        <end position="153"/>
    </location>
</feature>
<feature type="mutagenesis site" description="In 9Ala; abolished interaction with SRSF1 and CPSF6 without affecting interaction with GTP-bound Ran; when associated with A-660, A-664, A-667, A-671, A-702, A-750, A-751 and A-758." evidence="11">
    <original>R</original>
    <variation>A</variation>
    <location>
        <position position="620"/>
    </location>
</feature>
<feature type="mutagenesis site" description="In 9Ala; abolished interaction with SRSF1 and CPSF6 without affecting interaction with GTP-bound Ran; when associated with A-620, A-664, A-667, A-671, A-702, A-750, A-751 and A-758." evidence="11">
    <original>E</original>
    <variation>A</variation>
    <location>
        <position position="660"/>
    </location>
</feature>
<feature type="mutagenesis site" description="Abolished interaction with SRSF1. In 9Ala; abolished interaction with SRSF1 and CPSF6 without affecting interaction with GTP-bound Ran; when associated with A-620, A-660, A-667, A-671, A-702, A-750, A-751 and A-758." evidence="11">
    <original>R</original>
    <variation>A</variation>
    <location>
        <position position="664"/>
    </location>
</feature>
<feature type="mutagenesis site" description="In 9Ala; abolished interaction with SRSF1 and CPSF6 without affecting interaction with GTP-bound Ran; when associated with A-620, A-660, A-664, A-671, A-702, A-750, A-751 and A-758." evidence="11">
    <original>R</original>
    <variation>A</variation>
    <location>
        <position position="667"/>
    </location>
</feature>
<feature type="mutagenesis site" description="Abolished interaction with SRSF1. In 9Ala; abolished interaction with SRSF1 and CPSF6 without affecting interaction with GTP-bound Ran; when associated with A-620, A-660, A-664, A-667, A-702, A-750, A-751 and A-758." evidence="11">
    <original>R</original>
    <variation>A</variation>
    <location>
        <position position="671"/>
    </location>
</feature>
<feature type="mutagenesis site" description="Abolished interaction with SRSF1. In 9Ala; abolished interaction with SRSF1 and CPSF6 without affecting interaction with GTP-bound Ran; when associated with A-620, A-660, A-664, A-667, A-671, A-750, A-751 and A-758." evidence="11">
    <original>Y</original>
    <variation>A</variation>
    <location>
        <position position="702"/>
    </location>
</feature>
<feature type="mutagenesis site" description="Abolished interaction with SRSF1. In 9Ala; abolished interaction with SRSF1 and CPSF6 without affecting interaction with GTP-bound Ran; when associated with A-620, A-660, A-664, A-667, A-671, A-702, A-751 and A-758." evidence="11">
    <original>D</original>
    <variation>A</variation>
    <location>
        <position position="750"/>
    </location>
</feature>
<feature type="mutagenesis site" description="In 9Ala; abolished interaction with SRSF1 and CPSF6 without affecting interaction with GTP-bound Ran; when associated with A-620, A-660, A-664, A-667, A-671, A-702, A-750 and A-758." evidence="11">
    <original>D</original>
    <variation>A</variation>
    <location>
        <position position="751"/>
    </location>
</feature>
<feature type="mutagenesis site" description="Abolished interaction with SRSF1." evidence="11">
    <original>R</original>
    <variation>A</variation>
    <location>
        <position position="754"/>
    </location>
</feature>
<feature type="mutagenesis site" description="Abolished interaction with SRSF1. In 9Ala; abolished interaction with SRSF1 and CPSF6 without affecting interaction with GTP-bound Ran; when associated with A-620, A-660, A-664, A-667, A-671, A-702, A-750 and A-751." evidence="11">
    <original>R</original>
    <variation>A</variation>
    <location>
        <position position="758"/>
    </location>
</feature>
<feature type="sequence conflict" description="In Ref. 1; AAD38537." evidence="25" ref="1">
    <original>R</original>
    <variation>W</variation>
    <location>
        <position position="87"/>
    </location>
</feature>
<feature type="sequence conflict" description="In Ref. 3; AK225999." evidence="25" ref="3">
    <original>L</original>
    <variation>S</variation>
    <location>
        <position position="265"/>
    </location>
</feature>
<feature type="sequence conflict" description="In Ref. 3; AK225999." evidence="25" ref="3">
    <original>D</original>
    <variation>G</variation>
    <location>
        <position position="358"/>
    </location>
</feature>
<feature type="sequence conflict" description="In Ref. 3; AK225999." evidence="25" ref="3">
    <original>T</original>
    <variation>A</variation>
    <location>
        <position position="480"/>
    </location>
</feature>
<feature type="sequence conflict" description="In Ref. 3; AK225999." evidence="25" ref="3">
    <original>P</original>
    <variation>L</variation>
    <location>
        <position position="624"/>
    </location>
</feature>
<feature type="helix" evidence="37">
    <location>
        <begin position="8"/>
        <end position="20"/>
    </location>
</feature>
<feature type="helix" evidence="37">
    <location>
        <begin position="24"/>
        <end position="39"/>
    </location>
</feature>
<feature type="strand" evidence="39">
    <location>
        <begin position="40"/>
        <end position="42"/>
    </location>
</feature>
<feature type="helix" evidence="37">
    <location>
        <begin position="43"/>
        <end position="53"/>
    </location>
</feature>
<feature type="helix" evidence="37">
    <location>
        <begin position="57"/>
        <end position="73"/>
    </location>
</feature>
<feature type="helix" evidence="37">
    <location>
        <begin position="75"/>
        <end position="77"/>
    </location>
</feature>
<feature type="helix" evidence="37">
    <location>
        <begin position="82"/>
        <end position="96"/>
    </location>
</feature>
<feature type="turn" evidence="37">
    <location>
        <begin position="97"/>
        <end position="100"/>
    </location>
</feature>
<feature type="helix" evidence="37">
    <location>
        <begin position="102"/>
        <end position="117"/>
    </location>
</feature>
<feature type="strand" evidence="39">
    <location>
        <begin position="121"/>
        <end position="123"/>
    </location>
</feature>
<feature type="helix" evidence="37">
    <location>
        <begin position="125"/>
        <end position="133"/>
    </location>
</feature>
<feature type="strand" evidence="37">
    <location>
        <begin position="134"/>
        <end position="136"/>
    </location>
</feature>
<feature type="turn" evidence="37">
    <location>
        <begin position="137"/>
        <end position="139"/>
    </location>
</feature>
<feature type="helix" evidence="37">
    <location>
        <begin position="140"/>
        <end position="152"/>
    </location>
</feature>
<feature type="helix" evidence="37">
    <location>
        <begin position="153"/>
        <end position="155"/>
    </location>
</feature>
<feature type="turn" evidence="37">
    <location>
        <begin position="157"/>
        <end position="159"/>
    </location>
</feature>
<feature type="helix" evidence="37">
    <location>
        <begin position="163"/>
        <end position="188"/>
    </location>
</feature>
<feature type="turn" evidence="40">
    <location>
        <begin position="190"/>
        <end position="193"/>
    </location>
</feature>
<feature type="helix" evidence="37">
    <location>
        <begin position="195"/>
        <end position="211"/>
    </location>
</feature>
<feature type="helix" evidence="37">
    <location>
        <begin position="216"/>
        <end position="220"/>
    </location>
</feature>
<feature type="helix" evidence="37">
    <location>
        <begin position="223"/>
        <end position="233"/>
    </location>
</feature>
<feature type="helix" evidence="37">
    <location>
        <begin position="239"/>
        <end position="254"/>
    </location>
</feature>
<feature type="turn" evidence="37">
    <location>
        <begin position="259"/>
        <end position="262"/>
    </location>
</feature>
<feature type="helix" evidence="37">
    <location>
        <begin position="263"/>
        <end position="274"/>
    </location>
</feature>
<feature type="helix" evidence="37">
    <location>
        <begin position="277"/>
        <end position="285"/>
    </location>
</feature>
<feature type="helix" evidence="37">
    <location>
        <begin position="289"/>
        <end position="305"/>
    </location>
</feature>
<feature type="helix" evidence="37">
    <location>
        <begin position="307"/>
        <end position="312"/>
    </location>
</feature>
<feature type="helix" evidence="37">
    <location>
        <begin position="317"/>
        <end position="319"/>
    </location>
</feature>
<feature type="helix" evidence="37">
    <location>
        <begin position="322"/>
        <end position="331"/>
    </location>
</feature>
<feature type="helix" evidence="37">
    <location>
        <begin position="336"/>
        <end position="339"/>
    </location>
</feature>
<feature type="helix" evidence="37">
    <location>
        <begin position="340"/>
        <end position="342"/>
    </location>
</feature>
<feature type="helix" evidence="37">
    <location>
        <begin position="343"/>
        <end position="355"/>
    </location>
</feature>
<feature type="helix" evidence="37">
    <location>
        <begin position="362"/>
        <end position="364"/>
    </location>
</feature>
<feature type="helix" evidence="37">
    <location>
        <begin position="366"/>
        <end position="379"/>
    </location>
</feature>
<feature type="strand" evidence="37">
    <location>
        <begin position="392"/>
        <end position="394"/>
    </location>
</feature>
<feature type="helix" evidence="37">
    <location>
        <begin position="395"/>
        <end position="410"/>
    </location>
</feature>
<feature type="helix" evidence="37">
    <location>
        <begin position="411"/>
        <end position="413"/>
    </location>
</feature>
<feature type="helix" evidence="37">
    <location>
        <begin position="416"/>
        <end position="425"/>
    </location>
</feature>
<feature type="turn" evidence="37">
    <location>
        <begin position="426"/>
        <end position="430"/>
    </location>
</feature>
<feature type="helix" evidence="37">
    <location>
        <begin position="434"/>
        <end position="447"/>
    </location>
</feature>
<feature type="turn" evidence="37">
    <location>
        <begin position="448"/>
        <end position="450"/>
    </location>
</feature>
<feature type="helix" evidence="39">
    <location>
        <begin position="453"/>
        <end position="455"/>
    </location>
</feature>
<feature type="helix" evidence="37">
    <location>
        <begin position="456"/>
        <end position="467"/>
    </location>
</feature>
<feature type="helix" evidence="37">
    <location>
        <begin position="475"/>
        <end position="487"/>
    </location>
</feature>
<feature type="helix" evidence="37">
    <location>
        <begin position="490"/>
        <end position="494"/>
    </location>
</feature>
<feature type="helix" evidence="37">
    <location>
        <begin position="496"/>
        <end position="498"/>
    </location>
</feature>
<feature type="helix" evidence="37">
    <location>
        <begin position="499"/>
        <end position="510"/>
    </location>
</feature>
<feature type="helix" evidence="37">
    <location>
        <begin position="513"/>
        <end position="515"/>
    </location>
</feature>
<feature type="helix" evidence="37">
    <location>
        <begin position="516"/>
        <end position="529"/>
    </location>
</feature>
<feature type="helix" evidence="40">
    <location>
        <begin position="532"/>
        <end position="534"/>
    </location>
</feature>
<feature type="turn" evidence="37">
    <location>
        <begin position="535"/>
        <end position="537"/>
    </location>
</feature>
<feature type="helix" evidence="37">
    <location>
        <begin position="538"/>
        <end position="546"/>
    </location>
</feature>
<feature type="helix" evidence="37">
    <location>
        <begin position="547"/>
        <end position="550"/>
    </location>
</feature>
<feature type="helix" evidence="37">
    <location>
        <begin position="555"/>
        <end position="569"/>
    </location>
</feature>
<feature type="helix" evidence="37">
    <location>
        <begin position="574"/>
        <end position="595"/>
    </location>
</feature>
<feature type="helix" evidence="37">
    <location>
        <begin position="609"/>
        <end position="621"/>
    </location>
</feature>
<feature type="helix" evidence="37">
    <location>
        <begin position="635"/>
        <end position="651"/>
    </location>
</feature>
<feature type="turn" evidence="37">
    <location>
        <begin position="652"/>
        <end position="654"/>
    </location>
</feature>
<feature type="helix" evidence="37">
    <location>
        <begin position="656"/>
        <end position="673"/>
    </location>
</feature>
<feature type="helix" evidence="40">
    <location>
        <begin position="678"/>
        <end position="680"/>
    </location>
</feature>
<feature type="helix" evidence="37">
    <location>
        <begin position="681"/>
        <end position="694"/>
    </location>
</feature>
<feature type="helix" evidence="37">
    <location>
        <begin position="698"/>
        <end position="711"/>
    </location>
</feature>
<feature type="strand" evidence="38">
    <location>
        <begin position="712"/>
        <end position="714"/>
    </location>
</feature>
<feature type="turn" evidence="37">
    <location>
        <begin position="715"/>
        <end position="717"/>
    </location>
</feature>
<feature type="helix" evidence="37">
    <location>
        <begin position="718"/>
        <end position="737"/>
    </location>
</feature>
<feature type="helix" evidence="37">
    <location>
        <begin position="741"/>
        <end position="744"/>
    </location>
</feature>
<feature type="helix" evidence="37">
    <location>
        <begin position="746"/>
        <end position="762"/>
    </location>
</feature>
<feature type="helix" evidence="37">
    <location>
        <begin position="764"/>
        <end position="768"/>
    </location>
</feature>
<feature type="strand" evidence="37">
    <location>
        <begin position="769"/>
        <end position="771"/>
    </location>
</feature>
<feature type="helix" evidence="37">
    <location>
        <begin position="773"/>
        <end position="783"/>
    </location>
</feature>
<feature type="helix" evidence="37">
    <location>
        <begin position="789"/>
        <end position="803"/>
    </location>
</feature>
<feature type="helix" evidence="37">
    <location>
        <begin position="804"/>
        <end position="806"/>
    </location>
</feature>
<feature type="helix" evidence="37">
    <location>
        <begin position="815"/>
        <end position="842"/>
    </location>
</feature>
<feature type="helix" evidence="37">
    <location>
        <begin position="847"/>
        <end position="849"/>
    </location>
</feature>
<feature type="helix" evidence="37">
    <location>
        <begin position="850"/>
        <end position="877"/>
    </location>
</feature>
<feature type="helix" evidence="37">
    <location>
        <begin position="892"/>
        <end position="903"/>
    </location>
</feature>
<feature type="helix" evidence="37">
    <location>
        <begin position="908"/>
        <end position="919"/>
    </location>
</feature>
<accession>Q9Y5L0</accession>
<accession>A4D1K9</accession>
<accession>C9IZM0</accession>
<accession>Q6NUM1</accession>
<accession>Q96G71</accession>
<accession>Q96GU9</accession>
<accession>Q9Y3R2</accession>
<proteinExistence type="evidence at protein level"/>
<protein>
    <recommendedName>
        <fullName evidence="23">Transportin-3</fullName>
    </recommendedName>
    <alternativeName>
        <fullName>Importin-12</fullName>
        <shortName>Imp12</shortName>
    </alternativeName>
    <alternativeName>
        <fullName evidence="18 22">Transportin-SR</fullName>
        <shortName evidence="18">TRN-SR</shortName>
    </alternativeName>
</protein>
<sequence>MEGAKPTLQLVYQAVQALYHDPDPSGKERASFWLGELQRSVHAWEISDQLLQIRQDVESCYFAAQTMKMKIQTSFYELPTDSHASLRDSLLTHIQNLKDLSPVIVTQLALAIADLALQMPSWKGCVQTLVEKYSNDVTSLPFLLEILTVLPEEVHSRSLRIGANRRTEIIEDLAFYSSTVVSLLMTCVEKAGTDEKMLMKVFRCLGSWFNLGVLDSNFMANNKLLALLFEVLQQDKTSSNLHEAASDCVCSALYAIENVETNLPLAMQLFQGVLTLETAYHMAVAREDLDKVLNYCRIFTELCETFLEKIVCTPGQGLGDLRTLELLLICAGHPQYEVVEISFNFWYRLGEHLYKTNDEVIHGIFKAYIQRLLHALARHCQLEPDHEGVPEETDDFGEFRMRVSDLVKDLIFLIGSMECFAQLYSTLKEGNPPWEVTEAVLFIMAAIAKSVDPENNPTLVEVLEGVVRLPETVHTAVRYTSIELVGEMSEVVDRNPQFLDPVLGYLMKGLCEKPLASAAAKAIHNICSVCRDHMAQHFNGLLEIARSLDSFLLSPEAAVGLLKGTALVLARLPLDKITECLSELCSVQVMALKKLLSQEPSNGISSDPTVFLDRLAVIFRHTNPIVENGQTHPCQKVIQEIWPVLSETLNKHRADNRIVERCCRCLRFAVRCVGKGSAALLQPLVTQMVNVYHVHQHSCFLYLGSILVDEYGMEEGCRQGLLDMLQALCIPTFQLLEQQNGLQNHPDTVDDLFRLATRFIQRSPVTLLRSQVVIPILQWAIASTTLDHRDANCSVMRFLRDLIHTGVANDHEEDFELRKELIGQVMNQLGQQLVSQLLHTCCFCLPPYTLPDVAEVLWEIMQVDRPTFCRWLENSLKGLPKETTVGAVTVTHKQLTDFHKQVTSAEECKQVCWALRDFTRLFR</sequence>
<comment type="function">
    <text evidence="1 2 3 4 10 11 14 17">Importin, which transports target proteins into the nucleus (PubMed:10366588, PubMed:10713112, PubMed:11517331, PubMed:12628928, PubMed:24449914). Specifically mediates the nuclear import of splicing factor serine/arginine (SR) proteins, such as RBM4, SFRS1 and SFRS2, by recognizing phosphorylated SR domains (PubMed:10366588, PubMed:10713112, PubMed:11517331, PubMed:12628928, PubMed:24449914). Also mediates the nuclear import of serine/arginine (SR) protein CPSF6, independently of CPSF6 phosphorylation (PubMed:30916345, PubMed:31465518). The nuclear import process is regulated by the small GTPase Ran that partitions between cytoplasm and nucleus in the predominantly GDP- and GTP-bound form, respectively (PubMed:23878195, PubMed:24449914). Importin associates with target cargo proteins in the cytoplasm, and the competitive binding of GTP-bound Ran induces the release of cargos in the nucleus (PubMed:23878195, PubMed:24449914).</text>
</comment>
<comment type="function">
    <text evidence="5 6 7 13">(Microbial infection) Involved in immunodeficiency virus (HIV-1) infection by importing the pre-integration complex (PIC) into the nucleus (PubMed:18722123, PubMed:21901095, PubMed:22398280, PubMed:29329553). Required for a nuclear maturation step of HIV-1 prior to integration (PubMed:21901095, PubMed:22398280).</text>
</comment>
<comment type="subunit">
    <text evidence="1 2 3 4 10 11 12">Interacts with (GTP-bound) Ran (PubMed:23878195, PubMed:24449914, PubMed:24915079). Interacts with (phosphorylated) SFRS1 and SFRS2; leading to their nuclear import (PubMed:10366588, PubMed:10713112, PubMed:11517331). Interacts with NUP62 (PubMed:11517331, PubMed:24449914). Interacts with RBM4 (PubMed:12628928). Interacts with CPSF6, promoting its nuclear import (PubMed:24449914).</text>
</comment>
<comment type="subunit">
    <text evidence="5 13">(Microbial infection) Interacts with the HIV-1 pre-integration complex (PIC), which is composed of viral genome, matrix protein, Vpr and integrase (PubMed:18722123, PubMed:29329553). Interacts with HIV-1 integrase protein; the interaction is direct (PubMed:29329553).</text>
</comment>
<comment type="interaction">
    <interactant intactId="EBI-1042571">
        <id>Q9Y5L0</id>
    </interactant>
    <interactant intactId="EBI-718504">
        <id>Q13867</id>
        <label>BLMH</label>
    </interactant>
    <organismsDiffer>false</organismsDiffer>
    <experiments>3</experiments>
</comment>
<comment type="interaction">
    <interactant intactId="EBI-1042571">
        <id>Q9Y5L0</id>
    </interactant>
    <interactant intactId="EBI-11523526">
        <id>Q13554-3</id>
        <label>CAMK2B</label>
    </interactant>
    <organismsDiffer>false</organismsDiffer>
    <experiments>3</experiments>
</comment>
<comment type="interaction">
    <interactant intactId="EBI-1042571">
        <id>Q9Y5L0</id>
    </interactant>
    <interactant intactId="EBI-11534483">
        <id>Q13557-8</id>
        <label>CAMK2D</label>
    </interactant>
    <organismsDiffer>false</organismsDiffer>
    <experiments>3</experiments>
</comment>
<comment type="interaction">
    <interactant intactId="EBI-1042571">
        <id>Q9Y5L0</id>
    </interactant>
    <interactant intactId="EBI-12020154">
        <id>Q13555-5</id>
        <label>CAMK2G</label>
    </interactant>
    <organismsDiffer>false</organismsDiffer>
    <experiments>3</experiments>
</comment>
<comment type="interaction">
    <interactant intactId="EBI-1042571">
        <id>Q9Y5L0</id>
    </interactant>
    <interactant intactId="EBI-1056029">
        <id>Q16740</id>
        <label>CLPP</label>
    </interactant>
    <organismsDiffer>false</organismsDiffer>
    <experiments>3</experiments>
</comment>
<comment type="interaction">
    <interactant intactId="EBI-1042571">
        <id>Q9Y5L0</id>
    </interactant>
    <interactant intactId="EBI-2512024">
        <id>O75521</id>
        <label>ECI2</label>
    </interactant>
    <organismsDiffer>false</organismsDiffer>
    <experiments>3</experiments>
</comment>
<comment type="interaction">
    <interactant intactId="EBI-1042571">
        <id>Q9Y5L0</id>
    </interactant>
    <interactant intactId="EBI-958183">
        <id>P30793</id>
        <label>GCH1</label>
    </interactant>
    <organismsDiffer>false</organismsDiffer>
    <experiments>3</experiments>
</comment>
<comment type="interaction">
    <interactant intactId="EBI-1042571">
        <id>Q9Y5L0</id>
    </interactant>
    <interactant intactId="EBI-12141931">
        <id>Q8NDH6-2</id>
        <label>ICA1L</label>
    </interactant>
    <organismsDiffer>false</organismsDiffer>
    <experiments>3</experiments>
</comment>
<comment type="interaction">
    <interactant intactId="EBI-1042571">
        <id>Q9Y5L0</id>
    </interactant>
    <interactant intactId="EBI-2949715">
        <id>O95678</id>
        <label>KRT75</label>
    </interactant>
    <organismsDiffer>false</organismsDiffer>
    <experiments>3</experiments>
</comment>
<comment type="interaction">
    <interactant intactId="EBI-1042571">
        <id>Q9Y5L0</id>
    </interactant>
    <interactant intactId="EBI-10171774">
        <id>P60410</id>
        <label>KRTAP10-8</label>
    </interactant>
    <organismsDiffer>false</organismsDiffer>
    <experiments>3</experiments>
</comment>
<comment type="interaction">
    <interactant intactId="EBI-1042571">
        <id>Q9Y5L0</id>
    </interactant>
    <interactant intactId="EBI-16439278">
        <id>Q6FHY5</id>
        <label>MEOX2</label>
    </interactant>
    <organismsDiffer>false</organismsDiffer>
    <experiments>3</experiments>
</comment>
<comment type="interaction">
    <interactant intactId="EBI-1042571">
        <id>Q9Y5L0</id>
    </interactant>
    <interactant intactId="EBI-741141">
        <id>P15531</id>
        <label>NME1</label>
    </interactant>
    <organismsDiffer>false</organismsDiffer>
    <experiments>3</experiments>
</comment>
<comment type="interaction">
    <interactant intactId="EBI-1042571">
        <id>Q9Y5L0</id>
    </interactant>
    <interactant intactId="EBI-23791378">
        <id>Q8WVI7</id>
        <label>PPP1R1C</label>
    </interactant>
    <organismsDiffer>false</organismsDiffer>
    <experiments>3</experiments>
</comment>
<comment type="interaction">
    <interactant intactId="EBI-1042571">
        <id>Q9Y5L0</id>
    </interactant>
    <interactant intactId="EBI-17564583">
        <id>Q16385-2</id>
        <label>SSX2B</label>
    </interactant>
    <organismsDiffer>false</organismsDiffer>
    <experiments>3</experiments>
</comment>
<comment type="interaction">
    <interactant intactId="EBI-1042571">
        <id>Q9Y5L0</id>
    </interactant>
    <interactant intactId="EBI-1042571">
        <id>Q9Y5L0</id>
        <label>TNPO3</label>
    </interactant>
    <organismsDiffer>false</organismsDiffer>
    <experiments>3</experiments>
</comment>
<comment type="interaction">
    <interactant intactId="EBI-1042571">
        <id>Q9Y5L0</id>
    </interactant>
    <interactant intactId="EBI-9872653">
        <id>PRO_0000042447</id>
        <label>gag-pol</label>
        <dbReference type="UniProtKB" id="P04585"/>
    </interactant>
    <organismsDiffer>true</organismsDiffer>
    <experiments>6</experiments>
</comment>
<comment type="subcellular location">
    <subcellularLocation>
        <location evidence="16 26 27">Nucleus envelope</location>
    </subcellularLocation>
    <subcellularLocation>
        <location evidence="2">Cytoplasm</location>
    </subcellularLocation>
    <text evidence="16">Localizes to the nuclear envelope and annulate lamellae, which consists in stacks of endoplasmic reticulum membranes containing a high density of nuclear pores.</text>
</comment>
<comment type="alternative products">
    <event type="alternative splicing"/>
    <isoform>
        <id>Q9Y5L0-2</id>
        <name>2</name>
        <name evidence="19 20 22">Transportin-SR2</name>
        <name evidence="19 20 22">TRN-SR2</name>
        <sequence type="displayed"/>
    </isoform>
    <isoform>
        <id>Q9Y5L0-1</id>
        <name>1</name>
        <sequence type="described" ref="VSP_030174"/>
    </isoform>
    <isoform>
        <id>Q9Y5L0-3</id>
        <name>3</name>
        <sequence type="described" ref="VSP_011178"/>
    </isoform>
    <isoform>
        <id>Q9Y5L0-5</id>
        <name>4</name>
        <sequence type="described" ref="VSP_045494"/>
    </isoform>
</comment>
<comment type="tissue specificity">
    <text evidence="9">Expressed in skeletal muscle.</text>
</comment>
<comment type="polymorphism">
    <text evidence="17">Variations in TNPO3 are associated with resistance or susceptibility to immunodeficiency virus type 1 (resistance or susceptibility to HIV-1) [MIM:609423] (PubMed:31465518). A variation that causes LGMDD2 muscular dystrophy induces protection against HIV-1 infection (PubMed:31465518).</text>
</comment>
<comment type="disease" evidence="8 9 15 16 17">
    <disease id="DI-04143">
        <name>Muscular dystrophy, limb-girdle, autosomal dominant 2</name>
        <acronym>LGMDD2</acronym>
        <description>An autosomal dominant myopathy characterized by proximal muscle weakness primarily affecting the lower limbs, but also affecting the upper limbs in most patients. Affected individuals also have distal muscle weakness of the hands and lower leg muscles. The disease has generally a benign clinical course but some individuals with childhood or juvenile onset manifest severe widespread myopathy, leading to wheelchair dependency and respiratory insufficiency. Muscle biopsy shows dystrophic changes with abnormal nuclei, rimmed vacuoles, and filamentous inclusions.</description>
        <dbReference type="MIM" id="608423"/>
    </disease>
    <text>The disease is caused by variants affecting the gene represented in this entry.</text>
</comment>
<comment type="sequence caution" evidence="25">
    <conflict type="frameshift">
        <sequence resource="EMBL-CDS" id="AAD38537"/>
    </conflict>
</comment>
<organism>
    <name type="scientific">Homo sapiens</name>
    <name type="common">Human</name>
    <dbReference type="NCBI Taxonomy" id="9606"/>
    <lineage>
        <taxon>Eukaryota</taxon>
        <taxon>Metazoa</taxon>
        <taxon>Chordata</taxon>
        <taxon>Craniata</taxon>
        <taxon>Vertebrata</taxon>
        <taxon>Euteleostomi</taxon>
        <taxon>Mammalia</taxon>
        <taxon>Eutheria</taxon>
        <taxon>Euarchontoglires</taxon>
        <taxon>Primates</taxon>
        <taxon>Haplorrhini</taxon>
        <taxon>Catarrhini</taxon>
        <taxon>Hominidae</taxon>
        <taxon>Homo</taxon>
    </lineage>
</organism>
<name>TNPO3_HUMAN</name>
<evidence type="ECO:0000269" key="1">
    <source>
    </source>
</evidence>
<evidence type="ECO:0000269" key="2">
    <source>
    </source>
</evidence>
<evidence type="ECO:0000269" key="3">
    <source>
    </source>
</evidence>
<evidence type="ECO:0000269" key="4">
    <source>
    </source>
</evidence>
<evidence type="ECO:0000269" key="5">
    <source>
    </source>
</evidence>
<evidence type="ECO:0000269" key="6">
    <source>
    </source>
</evidence>
<evidence type="ECO:0000269" key="7">
    <source>
    </source>
</evidence>
<evidence type="ECO:0000269" key="8">
    <source>
    </source>
</evidence>
<evidence type="ECO:0000269" key="9">
    <source>
    </source>
</evidence>
<evidence type="ECO:0000269" key="10">
    <source>
    </source>
</evidence>
<evidence type="ECO:0000269" key="11">
    <source>
    </source>
</evidence>
<evidence type="ECO:0000269" key="12">
    <source>
    </source>
</evidence>
<evidence type="ECO:0000269" key="13">
    <source>
    </source>
</evidence>
<evidence type="ECO:0000269" key="14">
    <source>
    </source>
</evidence>
<evidence type="ECO:0000269" key="15">
    <source>
    </source>
</evidence>
<evidence type="ECO:0000269" key="16">
    <source>
    </source>
</evidence>
<evidence type="ECO:0000269" key="17">
    <source>
    </source>
</evidence>
<evidence type="ECO:0000303" key="18">
    <source>
    </source>
</evidence>
<evidence type="ECO:0000303" key="19">
    <source>
    </source>
</evidence>
<evidence type="ECO:0000303" key="20">
    <source>
    </source>
</evidence>
<evidence type="ECO:0000303" key="21">
    <source>
    </source>
</evidence>
<evidence type="ECO:0000303" key="22">
    <source>
    </source>
</evidence>
<evidence type="ECO:0000303" key="23">
    <source>
    </source>
</evidence>
<evidence type="ECO:0000303" key="24">
    <source ref="3"/>
</evidence>
<evidence type="ECO:0000305" key="25"/>
<evidence type="ECO:0000305" key="26">
    <source>
    </source>
</evidence>
<evidence type="ECO:0000305" key="27">
    <source>
    </source>
</evidence>
<evidence type="ECO:0000312" key="28">
    <source>
        <dbReference type="HGNC" id="HGNC:17103"/>
    </source>
</evidence>
<evidence type="ECO:0007744" key="29">
    <source>
        <dbReference type="PDB" id="4C0O"/>
    </source>
</evidence>
<evidence type="ECO:0007744" key="30">
    <source>
        <dbReference type="PDB" id="4C0P"/>
    </source>
</evidence>
<evidence type="ECO:0007744" key="31">
    <source>
        <dbReference type="PDB" id="4C0Q"/>
    </source>
</evidence>
<evidence type="ECO:0007744" key="32">
    <source>
        <dbReference type="PDB" id="4OL0"/>
    </source>
</evidence>
<evidence type="ECO:0007744" key="33">
    <source>
        <dbReference type="PDB" id="6GX9"/>
    </source>
</evidence>
<evidence type="ECO:0007744" key="34">
    <source>
    </source>
</evidence>
<evidence type="ECO:0007744" key="35">
    <source>
    </source>
</evidence>
<evidence type="ECO:0007744" key="36">
    <source>
    </source>
</evidence>
<evidence type="ECO:0007829" key="37">
    <source>
        <dbReference type="PDB" id="4C0O"/>
    </source>
</evidence>
<evidence type="ECO:0007829" key="38">
    <source>
        <dbReference type="PDB" id="4C0P"/>
    </source>
</evidence>
<evidence type="ECO:0007829" key="39">
    <source>
        <dbReference type="PDB" id="4OL0"/>
    </source>
</evidence>
<evidence type="ECO:0007829" key="40">
    <source>
        <dbReference type="PDB" id="6GX9"/>
    </source>
</evidence>
<dbReference type="EMBL" id="AF145029">
    <property type="protein sequence ID" value="AAD38537.1"/>
    <property type="status" value="ALT_FRAME"/>
    <property type="molecule type" value="mRNA"/>
</dbReference>
<dbReference type="EMBL" id="AJ133769">
    <property type="protein sequence ID" value="CAB42643.1"/>
    <property type="molecule type" value="mRNA"/>
</dbReference>
<dbReference type="EMBL" id="AK225999">
    <property type="status" value="NOT_ANNOTATED_CDS"/>
    <property type="molecule type" value="mRNA"/>
</dbReference>
<dbReference type="EMBL" id="AC018639">
    <property type="status" value="NOT_ANNOTATED_CDS"/>
    <property type="molecule type" value="Genomic_DNA"/>
</dbReference>
<dbReference type="EMBL" id="AC025594">
    <property type="status" value="NOT_ANNOTATED_CDS"/>
    <property type="molecule type" value="Genomic_DNA"/>
</dbReference>
<dbReference type="EMBL" id="CH236950">
    <property type="protein sequence ID" value="EAL24106.1"/>
    <property type="molecule type" value="Genomic_DNA"/>
</dbReference>
<dbReference type="EMBL" id="BC009221">
    <property type="protein sequence ID" value="AAH09221.2"/>
    <property type="molecule type" value="mRNA"/>
</dbReference>
<dbReference type="CCDS" id="CCDS55162.1">
    <molecule id="Q9Y5L0-5"/>
</dbReference>
<dbReference type="CCDS" id="CCDS5809.1">
    <molecule id="Q9Y5L0-2"/>
</dbReference>
<dbReference type="CCDS" id="CCDS94196.1">
    <molecule id="Q9Y5L0-1"/>
</dbReference>
<dbReference type="RefSeq" id="NP_001177957.2">
    <molecule id="Q9Y5L0-5"/>
    <property type="nucleotide sequence ID" value="NM_001191028.2"/>
</dbReference>
<dbReference type="RefSeq" id="NP_001369147.1">
    <molecule id="Q9Y5L0-3"/>
    <property type="nucleotide sequence ID" value="NM_001382218.1"/>
</dbReference>
<dbReference type="RefSeq" id="NP_036602.1">
    <molecule id="Q9Y5L0-2"/>
    <property type="nucleotide sequence ID" value="NM_012470.4"/>
</dbReference>
<dbReference type="PDB" id="4C0O">
    <property type="method" value="X-ray"/>
    <property type="resolution" value="2.56 A"/>
    <property type="chains" value="A/B=1-923"/>
</dbReference>
<dbReference type="PDB" id="4C0P">
    <property type="method" value="X-ray"/>
    <property type="resolution" value="2.95 A"/>
    <property type="chains" value="A/B/C/D=1-923"/>
</dbReference>
<dbReference type="PDB" id="4C0Q">
    <property type="method" value="X-ray"/>
    <property type="resolution" value="3.42 A"/>
    <property type="chains" value="A/B=1-923"/>
</dbReference>
<dbReference type="PDB" id="4OL0">
    <property type="method" value="X-ray"/>
    <property type="resolution" value="2.90 A"/>
    <property type="chains" value="B=3-923"/>
</dbReference>
<dbReference type="PDB" id="6GX9">
    <property type="method" value="X-ray"/>
    <property type="resolution" value="2.70 A"/>
    <property type="chains" value="A/B=1-923"/>
</dbReference>
<dbReference type="PDB" id="8CMK">
    <property type="method" value="X-ray"/>
    <property type="resolution" value="2.94 A"/>
    <property type="chains" value="A/B=1-923"/>
</dbReference>
<dbReference type="PDBsum" id="4C0O"/>
<dbReference type="PDBsum" id="4C0P"/>
<dbReference type="PDBsum" id="4C0Q"/>
<dbReference type="PDBsum" id="4OL0"/>
<dbReference type="PDBsum" id="6GX9"/>
<dbReference type="PDBsum" id="8CMK"/>
<dbReference type="SMR" id="Q9Y5L0"/>
<dbReference type="BioGRID" id="117080">
    <property type="interactions" value="264"/>
</dbReference>
<dbReference type="CORUM" id="Q9Y5L0"/>
<dbReference type="FunCoup" id="Q9Y5L0">
    <property type="interactions" value="4919"/>
</dbReference>
<dbReference type="IntAct" id="Q9Y5L0">
    <property type="interactions" value="174"/>
</dbReference>
<dbReference type="MINT" id="Q9Y5L0"/>
<dbReference type="STRING" id="9606.ENSP00000265388"/>
<dbReference type="GlyGen" id="Q9Y5L0">
    <property type="glycosylation" value="1 site, 1 O-linked glycan (1 site)"/>
</dbReference>
<dbReference type="iPTMnet" id="Q9Y5L0"/>
<dbReference type="PhosphoSitePlus" id="Q9Y5L0"/>
<dbReference type="SwissPalm" id="Q9Y5L0"/>
<dbReference type="BioMuta" id="TNPO3"/>
<dbReference type="DMDM" id="166215035"/>
<dbReference type="jPOST" id="Q9Y5L0"/>
<dbReference type="MassIVE" id="Q9Y5L0"/>
<dbReference type="PaxDb" id="9606-ENSP00000265388"/>
<dbReference type="PeptideAtlas" id="Q9Y5L0"/>
<dbReference type="ProteomicsDB" id="7822"/>
<dbReference type="ProteomicsDB" id="86436">
    <molecule id="Q9Y5L0-2"/>
</dbReference>
<dbReference type="ProteomicsDB" id="86437">
    <molecule id="Q9Y5L0-1"/>
</dbReference>
<dbReference type="ProteomicsDB" id="86438">
    <molecule id="Q9Y5L0-3"/>
</dbReference>
<dbReference type="Pumba" id="Q9Y5L0"/>
<dbReference type="Antibodypedia" id="17836">
    <property type="antibodies" value="147 antibodies from 31 providers"/>
</dbReference>
<dbReference type="DNASU" id="23534"/>
<dbReference type="Ensembl" id="ENST00000265388.10">
    <molecule id="Q9Y5L0-2"/>
    <property type="protein sequence ID" value="ENSP00000265388.5"/>
    <property type="gene ID" value="ENSG00000064419.14"/>
</dbReference>
<dbReference type="Ensembl" id="ENST00000471234.5">
    <molecule id="Q9Y5L0-5"/>
    <property type="protein sequence ID" value="ENSP00000418646.1"/>
    <property type="gene ID" value="ENSG00000064419.14"/>
</dbReference>
<dbReference type="GeneID" id="23534"/>
<dbReference type="KEGG" id="hsa:23534"/>
<dbReference type="MANE-Select" id="ENST00000265388.10">
    <property type="protein sequence ID" value="ENSP00000265388.5"/>
    <property type="RefSeq nucleotide sequence ID" value="NM_012470.4"/>
    <property type="RefSeq protein sequence ID" value="NP_036602.1"/>
</dbReference>
<dbReference type="UCSC" id="uc003vol.3">
    <molecule id="Q9Y5L0-2"/>
    <property type="organism name" value="human"/>
</dbReference>
<dbReference type="AGR" id="HGNC:17103"/>
<dbReference type="CTD" id="23534"/>
<dbReference type="DisGeNET" id="23534"/>
<dbReference type="GeneCards" id="TNPO3"/>
<dbReference type="HGNC" id="HGNC:17103">
    <property type="gene designation" value="TNPO3"/>
</dbReference>
<dbReference type="HPA" id="ENSG00000064419">
    <property type="expression patterns" value="Low tissue specificity"/>
</dbReference>
<dbReference type="MalaCards" id="TNPO3"/>
<dbReference type="MIM" id="608423">
    <property type="type" value="phenotype"/>
</dbReference>
<dbReference type="MIM" id="609423">
    <property type="type" value="phenotype"/>
</dbReference>
<dbReference type="MIM" id="610032">
    <property type="type" value="gene"/>
</dbReference>
<dbReference type="neXtProt" id="NX_Q9Y5L0"/>
<dbReference type="OpenTargets" id="ENSG00000064419"/>
<dbReference type="Orphanet" id="186">
    <property type="disease" value="Primary biliary cholangitis"/>
</dbReference>
<dbReference type="Orphanet" id="55595">
    <property type="disease" value="TNP03-related limb-girdle muscular dystrophy D2"/>
</dbReference>
<dbReference type="PharmGKB" id="PA134888159"/>
<dbReference type="VEuPathDB" id="HostDB:ENSG00000064419"/>
<dbReference type="eggNOG" id="KOG2081">
    <property type="taxonomic scope" value="Eukaryota"/>
</dbReference>
<dbReference type="GeneTree" id="ENSGT00530000063347"/>
<dbReference type="HOGENOM" id="CLU_005996_0_2_1"/>
<dbReference type="InParanoid" id="Q9Y5L0"/>
<dbReference type="OMA" id="LECITSW"/>
<dbReference type="OrthoDB" id="435593at2759"/>
<dbReference type="PAN-GO" id="Q9Y5L0">
    <property type="GO annotations" value="2 GO annotations based on evolutionary models"/>
</dbReference>
<dbReference type="PhylomeDB" id="Q9Y5L0"/>
<dbReference type="TreeFam" id="TF314539"/>
<dbReference type="PathwayCommons" id="Q9Y5L0"/>
<dbReference type="SignaLink" id="Q9Y5L0"/>
<dbReference type="BioGRID-ORCS" id="23534">
    <property type="hits" value="791 hits in 1168 CRISPR screens"/>
</dbReference>
<dbReference type="ChiTaRS" id="TNPO3">
    <property type="organism name" value="human"/>
</dbReference>
<dbReference type="EvolutionaryTrace" id="Q9Y5L0"/>
<dbReference type="GeneWiki" id="Transportin-3"/>
<dbReference type="GenomeRNAi" id="23534"/>
<dbReference type="Pharos" id="Q9Y5L0">
    <property type="development level" value="Tbio"/>
</dbReference>
<dbReference type="PRO" id="PR:Q9Y5L0"/>
<dbReference type="Proteomes" id="UP000005640">
    <property type="component" value="Chromosome 7"/>
</dbReference>
<dbReference type="RNAct" id="Q9Y5L0">
    <property type="molecule type" value="protein"/>
</dbReference>
<dbReference type="Bgee" id="ENSG00000064419">
    <property type="expression patterns" value="Expressed in secondary oocyte and 222 other cell types or tissues"/>
</dbReference>
<dbReference type="ExpressionAtlas" id="Q9Y5L0">
    <property type="expression patterns" value="baseline and differential"/>
</dbReference>
<dbReference type="GO" id="GO:0005642">
    <property type="term" value="C:annulate lamellae"/>
    <property type="evidence" value="ECO:0000314"/>
    <property type="project" value="UniProtKB"/>
</dbReference>
<dbReference type="GO" id="GO:0005737">
    <property type="term" value="C:cytoplasm"/>
    <property type="evidence" value="ECO:0000318"/>
    <property type="project" value="GO_Central"/>
</dbReference>
<dbReference type="GO" id="GO:0005829">
    <property type="term" value="C:cytosol"/>
    <property type="evidence" value="ECO:0000314"/>
    <property type="project" value="HPA"/>
</dbReference>
<dbReference type="GO" id="GO:0005635">
    <property type="term" value="C:nuclear envelope"/>
    <property type="evidence" value="ECO:0000314"/>
    <property type="project" value="UniProtKB"/>
</dbReference>
<dbReference type="GO" id="GO:0005654">
    <property type="term" value="C:nucleoplasm"/>
    <property type="evidence" value="ECO:0000314"/>
    <property type="project" value="HPA"/>
</dbReference>
<dbReference type="GO" id="GO:0042802">
    <property type="term" value="F:identical protein binding"/>
    <property type="evidence" value="ECO:0000353"/>
    <property type="project" value="IntAct"/>
</dbReference>
<dbReference type="GO" id="GO:0061608">
    <property type="term" value="F:nuclear import signal receptor activity"/>
    <property type="evidence" value="ECO:0000304"/>
    <property type="project" value="GO_Central"/>
</dbReference>
<dbReference type="GO" id="GO:0031267">
    <property type="term" value="F:small GTPase binding"/>
    <property type="evidence" value="ECO:0000314"/>
    <property type="project" value="UniProtKB"/>
</dbReference>
<dbReference type="GO" id="GO:0006606">
    <property type="term" value="P:protein import into nucleus"/>
    <property type="evidence" value="ECO:0000314"/>
    <property type="project" value="UniProtKB"/>
</dbReference>
<dbReference type="FunFam" id="1.25.10.10:FF:000079">
    <property type="entry name" value="transportin-3 isoform X1"/>
    <property type="match status" value="1"/>
</dbReference>
<dbReference type="Gene3D" id="1.25.10.10">
    <property type="entry name" value="Leucine-rich Repeat Variant"/>
    <property type="match status" value="1"/>
</dbReference>
<dbReference type="IDEAL" id="IID00632"/>
<dbReference type="InterPro" id="IPR011989">
    <property type="entry name" value="ARM-like"/>
</dbReference>
<dbReference type="InterPro" id="IPR016024">
    <property type="entry name" value="ARM-type_fold"/>
</dbReference>
<dbReference type="InterPro" id="IPR013598">
    <property type="entry name" value="Exportin-1/Importin-b-like"/>
</dbReference>
<dbReference type="InterPro" id="IPR051345">
    <property type="entry name" value="Importin_beta-like_NTR"/>
</dbReference>
<dbReference type="PANTHER" id="PTHR12363">
    <property type="entry name" value="TRANSPORTIN 3 AND IMPORTIN 13"/>
    <property type="match status" value="1"/>
</dbReference>
<dbReference type="PANTHER" id="PTHR12363:SF42">
    <property type="entry name" value="TRANSPORTIN-3"/>
    <property type="match status" value="1"/>
</dbReference>
<dbReference type="Pfam" id="PF24138">
    <property type="entry name" value="TPR_TNPO3_IPO13_2nd"/>
    <property type="match status" value="1"/>
</dbReference>
<dbReference type="Pfam" id="PF24140">
    <property type="entry name" value="TPR_TNPO3_IPO13_3rd"/>
    <property type="match status" value="1"/>
</dbReference>
<dbReference type="Pfam" id="PF24139">
    <property type="entry name" value="TPR_TNPO3_IPO13_4th"/>
    <property type="match status" value="1"/>
</dbReference>
<dbReference type="Pfam" id="PF08389">
    <property type="entry name" value="Xpo1"/>
    <property type="match status" value="1"/>
</dbReference>
<dbReference type="SUPFAM" id="SSF48371">
    <property type="entry name" value="ARM repeat"/>
    <property type="match status" value="1"/>
</dbReference>
<gene>
    <name evidence="23 28" type="primary">TNPO3</name>
    <name type="synonym">IPO12</name>
</gene>